<reference key="1">
    <citation type="submission" date="2007-06" db="EMBL/GenBank/DDBJ databases">
        <title>Complete sequence of Sinorhizobium medicae WSM419 chromosome.</title>
        <authorList>
            <consortium name="US DOE Joint Genome Institute"/>
            <person name="Copeland A."/>
            <person name="Lucas S."/>
            <person name="Lapidus A."/>
            <person name="Barry K."/>
            <person name="Glavina del Rio T."/>
            <person name="Dalin E."/>
            <person name="Tice H."/>
            <person name="Pitluck S."/>
            <person name="Chain P."/>
            <person name="Malfatti S."/>
            <person name="Shin M."/>
            <person name="Vergez L."/>
            <person name="Schmutz J."/>
            <person name="Larimer F."/>
            <person name="Land M."/>
            <person name="Hauser L."/>
            <person name="Kyrpides N."/>
            <person name="Mikhailova N."/>
            <person name="Reeve W.G."/>
            <person name="Richardson P."/>
        </authorList>
    </citation>
    <scope>NUCLEOTIDE SEQUENCE [LARGE SCALE GENOMIC DNA]</scope>
    <source>
        <strain>WSM419</strain>
    </source>
</reference>
<dbReference type="EC" id="1.4.99.-" evidence="1"/>
<dbReference type="EMBL" id="CP000738">
    <property type="protein sequence ID" value="ABR60926.1"/>
    <property type="molecule type" value="Genomic_DNA"/>
</dbReference>
<dbReference type="RefSeq" id="WP_011976223.1">
    <property type="nucleotide sequence ID" value="NC_009636.1"/>
</dbReference>
<dbReference type="RefSeq" id="YP_001327761.1">
    <property type="nucleotide sequence ID" value="NC_009636.1"/>
</dbReference>
<dbReference type="SMR" id="A6UB96"/>
<dbReference type="STRING" id="366394.Smed_2093"/>
<dbReference type="KEGG" id="smd:Smed_2093"/>
<dbReference type="PATRIC" id="fig|366394.8.peg.5251"/>
<dbReference type="eggNOG" id="COG0665">
    <property type="taxonomic scope" value="Bacteria"/>
</dbReference>
<dbReference type="HOGENOM" id="CLU_007884_9_2_5"/>
<dbReference type="OrthoDB" id="9805337at2"/>
<dbReference type="UniPathway" id="UPA00043">
    <property type="reaction ID" value="UER00498"/>
</dbReference>
<dbReference type="Proteomes" id="UP000001108">
    <property type="component" value="Chromosome"/>
</dbReference>
<dbReference type="GO" id="GO:0005737">
    <property type="term" value="C:cytoplasm"/>
    <property type="evidence" value="ECO:0007669"/>
    <property type="project" value="TreeGrafter"/>
</dbReference>
<dbReference type="GO" id="GO:0005886">
    <property type="term" value="C:plasma membrane"/>
    <property type="evidence" value="ECO:0007669"/>
    <property type="project" value="TreeGrafter"/>
</dbReference>
<dbReference type="GO" id="GO:0008718">
    <property type="term" value="F:D-amino-acid dehydrogenase activity"/>
    <property type="evidence" value="ECO:0007669"/>
    <property type="project" value="UniProtKB-UniRule"/>
</dbReference>
<dbReference type="GO" id="GO:0055130">
    <property type="term" value="P:D-alanine catabolic process"/>
    <property type="evidence" value="ECO:0007669"/>
    <property type="project" value="UniProtKB-UniPathway"/>
</dbReference>
<dbReference type="FunFam" id="3.50.50.60:FF:000020">
    <property type="entry name" value="D-amino acid dehydrogenase"/>
    <property type="match status" value="1"/>
</dbReference>
<dbReference type="Gene3D" id="3.30.9.10">
    <property type="entry name" value="D-Amino Acid Oxidase, subunit A, domain 2"/>
    <property type="match status" value="1"/>
</dbReference>
<dbReference type="Gene3D" id="3.50.50.60">
    <property type="entry name" value="FAD/NAD(P)-binding domain"/>
    <property type="match status" value="2"/>
</dbReference>
<dbReference type="HAMAP" id="MF_01202">
    <property type="entry name" value="DadA"/>
    <property type="match status" value="1"/>
</dbReference>
<dbReference type="InterPro" id="IPR023080">
    <property type="entry name" value="DadA"/>
</dbReference>
<dbReference type="InterPro" id="IPR006076">
    <property type="entry name" value="FAD-dep_OxRdtase"/>
</dbReference>
<dbReference type="InterPro" id="IPR036188">
    <property type="entry name" value="FAD/NAD-bd_sf"/>
</dbReference>
<dbReference type="NCBIfam" id="NF001933">
    <property type="entry name" value="PRK00711.1"/>
    <property type="match status" value="1"/>
</dbReference>
<dbReference type="PANTHER" id="PTHR13847:SF280">
    <property type="entry name" value="D-AMINO ACID DEHYDROGENASE"/>
    <property type="match status" value="1"/>
</dbReference>
<dbReference type="PANTHER" id="PTHR13847">
    <property type="entry name" value="SARCOSINE DEHYDROGENASE-RELATED"/>
    <property type="match status" value="1"/>
</dbReference>
<dbReference type="Pfam" id="PF01266">
    <property type="entry name" value="DAO"/>
    <property type="match status" value="1"/>
</dbReference>
<dbReference type="SUPFAM" id="SSF54373">
    <property type="entry name" value="FAD-linked reductases, C-terminal domain"/>
    <property type="match status" value="1"/>
</dbReference>
<dbReference type="SUPFAM" id="SSF51905">
    <property type="entry name" value="FAD/NAD(P)-binding domain"/>
    <property type="match status" value="1"/>
</dbReference>
<protein>
    <recommendedName>
        <fullName evidence="1">D-amino acid dehydrogenase</fullName>
        <ecNumber evidence="1">1.4.99.-</ecNumber>
    </recommendedName>
</protein>
<evidence type="ECO:0000255" key="1">
    <source>
        <dbReference type="HAMAP-Rule" id="MF_01202"/>
    </source>
</evidence>
<gene>
    <name evidence="1" type="primary">dadA</name>
    <name type="ordered locus">Smed_2093</name>
</gene>
<keyword id="KW-0274">FAD</keyword>
<keyword id="KW-0285">Flavoprotein</keyword>
<keyword id="KW-0560">Oxidoreductase</keyword>
<accession>A6UB96</accession>
<proteinExistence type="inferred from homology"/>
<sequence length="416" mass="44828">MKVIVLGAGIIGVTSAYQLSRAGHEVTVIDRQPGPALETSFANAGEVSFGYCSPWAAPGIPMKALKWLFMQHAPLILRPRIDAAMLSWMAKMLSNCTSRRYAVNKSRMLRLADYSRTSLAALREETAITYDERMQGTLQLFRTEAQLDASAKDISALAADGIPYEVLDRDGCIRAEPALGRVRDKIVGGLLTPQDETGDCFKFANALAGRAEKLGVCFDYGTEIRALEVDGGRVHGVVTSKGRRAADAVVVALGSYSPLLVRRFGIRLPVYPVKGYSLTIPIADASRAPVSTVMDETYKIAITRLGDRIRVGGMAEISGYTNDLGIARRRTLEHSVMDLFPGGDAAKGSFWSGLRPMTPDGTPVIGPTRIAGLFLNTGHGTLGWTMSSGSARVIADLVSDRKLEIDATDLAIARYG</sequence>
<name>DADA_SINMW</name>
<organism>
    <name type="scientific">Sinorhizobium medicae (strain WSM419)</name>
    <name type="common">Ensifer medicae</name>
    <dbReference type="NCBI Taxonomy" id="366394"/>
    <lineage>
        <taxon>Bacteria</taxon>
        <taxon>Pseudomonadati</taxon>
        <taxon>Pseudomonadota</taxon>
        <taxon>Alphaproteobacteria</taxon>
        <taxon>Hyphomicrobiales</taxon>
        <taxon>Rhizobiaceae</taxon>
        <taxon>Sinorhizobium/Ensifer group</taxon>
        <taxon>Sinorhizobium</taxon>
    </lineage>
</organism>
<feature type="chain" id="PRO_1000066120" description="D-amino acid dehydrogenase">
    <location>
        <begin position="1"/>
        <end position="416"/>
    </location>
</feature>
<feature type="binding site" evidence="1">
    <location>
        <begin position="3"/>
        <end position="17"/>
    </location>
    <ligand>
        <name>FAD</name>
        <dbReference type="ChEBI" id="CHEBI:57692"/>
    </ligand>
</feature>
<comment type="function">
    <text evidence="1">Oxidative deamination of D-amino acids.</text>
</comment>
<comment type="catalytic activity">
    <reaction evidence="1">
        <text>a D-alpha-amino acid + A + H2O = a 2-oxocarboxylate + AH2 + NH4(+)</text>
        <dbReference type="Rhea" id="RHEA:18125"/>
        <dbReference type="ChEBI" id="CHEBI:13193"/>
        <dbReference type="ChEBI" id="CHEBI:15377"/>
        <dbReference type="ChEBI" id="CHEBI:17499"/>
        <dbReference type="ChEBI" id="CHEBI:28938"/>
        <dbReference type="ChEBI" id="CHEBI:35179"/>
        <dbReference type="ChEBI" id="CHEBI:59871"/>
    </reaction>
</comment>
<comment type="cofactor">
    <cofactor evidence="1">
        <name>FAD</name>
        <dbReference type="ChEBI" id="CHEBI:57692"/>
    </cofactor>
</comment>
<comment type="pathway">
    <text>Amino-acid degradation; D-alanine degradation; NH(3) and pyruvate from D-alanine: step 1/1.</text>
</comment>
<comment type="similarity">
    <text evidence="1">Belongs to the DadA oxidoreductase family.</text>
</comment>